<organism>
    <name type="scientific">Arabidopsis thaliana</name>
    <name type="common">Mouse-ear cress</name>
    <dbReference type="NCBI Taxonomy" id="3702"/>
    <lineage>
        <taxon>Eukaryota</taxon>
        <taxon>Viridiplantae</taxon>
        <taxon>Streptophyta</taxon>
        <taxon>Embryophyta</taxon>
        <taxon>Tracheophyta</taxon>
        <taxon>Spermatophyta</taxon>
        <taxon>Magnoliopsida</taxon>
        <taxon>eudicotyledons</taxon>
        <taxon>Gunneridae</taxon>
        <taxon>Pentapetalae</taxon>
        <taxon>rosids</taxon>
        <taxon>malvids</taxon>
        <taxon>Brassicales</taxon>
        <taxon>Brassicaceae</taxon>
        <taxon>Camelineae</taxon>
        <taxon>Arabidopsis</taxon>
    </lineage>
</organism>
<name>FAF1_ARATH</name>
<proteinExistence type="evidence at transcript level"/>
<accession>Q9SY06</accession>
<accession>Q6NKQ3</accession>
<dbReference type="EMBL" id="AC004044">
    <property type="protein sequence ID" value="AAD15352.1"/>
    <property type="molecule type" value="Genomic_DNA"/>
</dbReference>
<dbReference type="EMBL" id="AL161495">
    <property type="protein sequence ID" value="CAB77766.1"/>
    <property type="molecule type" value="Genomic_DNA"/>
</dbReference>
<dbReference type="EMBL" id="CP002687">
    <property type="protein sequence ID" value="AEE82232.1"/>
    <property type="molecule type" value="Genomic_DNA"/>
</dbReference>
<dbReference type="EMBL" id="BT012641">
    <property type="protein sequence ID" value="AAT06460.1"/>
    <property type="molecule type" value="mRNA"/>
</dbReference>
<dbReference type="EMBL" id="AK176321">
    <property type="protein sequence ID" value="BAD44084.1"/>
    <property type="molecule type" value="mRNA"/>
</dbReference>
<dbReference type="EMBL" id="AB493673">
    <property type="protein sequence ID" value="BAH30511.1"/>
    <property type="molecule type" value="Genomic_DNA"/>
</dbReference>
<dbReference type="PIR" id="G85035">
    <property type="entry name" value="G85035"/>
</dbReference>
<dbReference type="RefSeq" id="NP_192190.1">
    <property type="nucleotide sequence ID" value="NM_116515.4"/>
</dbReference>
<dbReference type="BioGRID" id="13459">
    <property type="interactions" value="3"/>
</dbReference>
<dbReference type="STRING" id="3702.Q9SY06"/>
<dbReference type="PaxDb" id="3702-AT4G02810.1"/>
<dbReference type="EnsemblPlants" id="AT4G02810.1">
    <property type="protein sequence ID" value="AT4G02810.1"/>
    <property type="gene ID" value="AT4G02810"/>
</dbReference>
<dbReference type="GeneID" id="828170"/>
<dbReference type="Gramene" id="AT4G02810.1">
    <property type="protein sequence ID" value="AT4G02810.1"/>
    <property type="gene ID" value="AT4G02810"/>
</dbReference>
<dbReference type="KEGG" id="ath:AT4G02810"/>
<dbReference type="Araport" id="AT4G02810"/>
<dbReference type="TAIR" id="AT4G02810">
    <property type="gene designation" value="FAF1"/>
</dbReference>
<dbReference type="eggNOG" id="ENOG502RYS2">
    <property type="taxonomic scope" value="Eukaryota"/>
</dbReference>
<dbReference type="HOGENOM" id="CLU_053779_0_0_1"/>
<dbReference type="InParanoid" id="Q9SY06"/>
<dbReference type="OMA" id="CFVSERR"/>
<dbReference type="PhylomeDB" id="Q9SY06"/>
<dbReference type="PRO" id="PR:Q9SY06"/>
<dbReference type="Proteomes" id="UP000006548">
    <property type="component" value="Chromosome 4"/>
</dbReference>
<dbReference type="ExpressionAtlas" id="Q9SY06">
    <property type="expression patterns" value="baseline and differential"/>
</dbReference>
<dbReference type="Gene3D" id="3.30.70.2850">
    <property type="match status" value="1"/>
</dbReference>
<dbReference type="InterPro" id="IPR021410">
    <property type="entry name" value="FAF"/>
</dbReference>
<dbReference type="InterPro" id="IPR046431">
    <property type="entry name" value="FAF_dom"/>
</dbReference>
<dbReference type="PANTHER" id="PTHR33155">
    <property type="entry name" value="FANTASTIC FOUR-LIKE PROTEIN (DUF3049)"/>
    <property type="match status" value="1"/>
</dbReference>
<dbReference type="PANTHER" id="PTHR33155:SF8">
    <property type="entry name" value="PROTEIN FANTASTIC FOUR 1"/>
    <property type="match status" value="1"/>
</dbReference>
<dbReference type="Pfam" id="PF11250">
    <property type="entry name" value="FAF"/>
    <property type="match status" value="1"/>
</dbReference>
<keyword id="KW-1185">Reference proteome</keyword>
<gene>
    <name type="primary">FAF1</name>
    <name type="ordered locus">At4g02810</name>
    <name type="ORF">T5J8.13</name>
</gene>
<reference key="1">
    <citation type="journal article" date="1999" name="Nature">
        <title>Sequence and analysis of chromosome 4 of the plant Arabidopsis thaliana.</title>
        <authorList>
            <person name="Mayer K.F.X."/>
            <person name="Schueller C."/>
            <person name="Wambutt R."/>
            <person name="Murphy G."/>
            <person name="Volckaert G."/>
            <person name="Pohl T."/>
            <person name="Duesterhoeft A."/>
            <person name="Stiekema W."/>
            <person name="Entian K.-D."/>
            <person name="Terryn N."/>
            <person name="Harris B."/>
            <person name="Ansorge W."/>
            <person name="Brandt P."/>
            <person name="Grivell L.A."/>
            <person name="Rieger M."/>
            <person name="Weichselgartner M."/>
            <person name="de Simone V."/>
            <person name="Obermaier B."/>
            <person name="Mache R."/>
            <person name="Mueller M."/>
            <person name="Kreis M."/>
            <person name="Delseny M."/>
            <person name="Puigdomenech P."/>
            <person name="Watson M."/>
            <person name="Schmidtheini T."/>
            <person name="Reichert B."/>
            <person name="Portetelle D."/>
            <person name="Perez-Alonso M."/>
            <person name="Boutry M."/>
            <person name="Bancroft I."/>
            <person name="Vos P."/>
            <person name="Hoheisel J."/>
            <person name="Zimmermann W."/>
            <person name="Wedler H."/>
            <person name="Ridley P."/>
            <person name="Langham S.-A."/>
            <person name="McCullagh B."/>
            <person name="Bilham L."/>
            <person name="Robben J."/>
            <person name="van der Schueren J."/>
            <person name="Grymonprez B."/>
            <person name="Chuang Y.-J."/>
            <person name="Vandenbussche F."/>
            <person name="Braeken M."/>
            <person name="Weltjens I."/>
            <person name="Voet M."/>
            <person name="Bastiaens I."/>
            <person name="Aert R."/>
            <person name="Defoor E."/>
            <person name="Weitzenegger T."/>
            <person name="Bothe G."/>
            <person name="Ramsperger U."/>
            <person name="Hilbert H."/>
            <person name="Braun M."/>
            <person name="Holzer E."/>
            <person name="Brandt A."/>
            <person name="Peters S."/>
            <person name="van Staveren M."/>
            <person name="Dirkse W."/>
            <person name="Mooijman P."/>
            <person name="Klein Lankhorst R."/>
            <person name="Rose M."/>
            <person name="Hauf J."/>
            <person name="Koetter P."/>
            <person name="Berneiser S."/>
            <person name="Hempel S."/>
            <person name="Feldpausch M."/>
            <person name="Lamberth S."/>
            <person name="Van den Daele H."/>
            <person name="De Keyser A."/>
            <person name="Buysshaert C."/>
            <person name="Gielen J."/>
            <person name="Villarroel R."/>
            <person name="De Clercq R."/>
            <person name="van Montagu M."/>
            <person name="Rogers J."/>
            <person name="Cronin A."/>
            <person name="Quail M.A."/>
            <person name="Bray-Allen S."/>
            <person name="Clark L."/>
            <person name="Doggett J."/>
            <person name="Hall S."/>
            <person name="Kay M."/>
            <person name="Lennard N."/>
            <person name="McLay K."/>
            <person name="Mayes R."/>
            <person name="Pettett A."/>
            <person name="Rajandream M.A."/>
            <person name="Lyne M."/>
            <person name="Benes V."/>
            <person name="Rechmann S."/>
            <person name="Borkova D."/>
            <person name="Bloecker H."/>
            <person name="Scharfe M."/>
            <person name="Grimm M."/>
            <person name="Loehnert T.-H."/>
            <person name="Dose S."/>
            <person name="de Haan M."/>
            <person name="Maarse A.C."/>
            <person name="Schaefer M."/>
            <person name="Mueller-Auer S."/>
            <person name="Gabel C."/>
            <person name="Fuchs M."/>
            <person name="Fartmann B."/>
            <person name="Granderath K."/>
            <person name="Dauner D."/>
            <person name="Herzl A."/>
            <person name="Neumann S."/>
            <person name="Argiriou A."/>
            <person name="Vitale D."/>
            <person name="Liguori R."/>
            <person name="Piravandi E."/>
            <person name="Massenet O."/>
            <person name="Quigley F."/>
            <person name="Clabauld G."/>
            <person name="Muendlein A."/>
            <person name="Felber R."/>
            <person name="Schnabl S."/>
            <person name="Hiller R."/>
            <person name="Schmidt W."/>
            <person name="Lecharny A."/>
            <person name="Aubourg S."/>
            <person name="Chefdor F."/>
            <person name="Cooke R."/>
            <person name="Berger C."/>
            <person name="Monfort A."/>
            <person name="Casacuberta E."/>
            <person name="Gibbons T."/>
            <person name="Weber N."/>
            <person name="Vandenbol M."/>
            <person name="Bargues M."/>
            <person name="Terol J."/>
            <person name="Torres A."/>
            <person name="Perez-Perez A."/>
            <person name="Purnelle B."/>
            <person name="Bent E."/>
            <person name="Johnson S."/>
            <person name="Tacon D."/>
            <person name="Jesse T."/>
            <person name="Heijnen L."/>
            <person name="Schwarz S."/>
            <person name="Scholler P."/>
            <person name="Heber S."/>
            <person name="Francs P."/>
            <person name="Bielke C."/>
            <person name="Frishman D."/>
            <person name="Haase D."/>
            <person name="Lemcke K."/>
            <person name="Mewes H.-W."/>
            <person name="Stocker S."/>
            <person name="Zaccaria P."/>
            <person name="Bevan M."/>
            <person name="Wilson R.K."/>
            <person name="de la Bastide M."/>
            <person name="Habermann K."/>
            <person name="Parnell L."/>
            <person name="Dedhia N."/>
            <person name="Gnoj L."/>
            <person name="Schutz K."/>
            <person name="Huang E."/>
            <person name="Spiegel L."/>
            <person name="Sekhon M."/>
            <person name="Murray J."/>
            <person name="Sheet P."/>
            <person name="Cordes M."/>
            <person name="Abu-Threideh J."/>
            <person name="Stoneking T."/>
            <person name="Kalicki J."/>
            <person name="Graves T."/>
            <person name="Harmon G."/>
            <person name="Edwards J."/>
            <person name="Latreille P."/>
            <person name="Courtney L."/>
            <person name="Cloud J."/>
            <person name="Abbott A."/>
            <person name="Scott K."/>
            <person name="Johnson D."/>
            <person name="Minx P."/>
            <person name="Bentley D."/>
            <person name="Fulton B."/>
            <person name="Miller N."/>
            <person name="Greco T."/>
            <person name="Kemp K."/>
            <person name="Kramer J."/>
            <person name="Fulton L."/>
            <person name="Mardis E."/>
            <person name="Dante M."/>
            <person name="Pepin K."/>
            <person name="Hillier L.W."/>
            <person name="Nelson J."/>
            <person name="Spieth J."/>
            <person name="Ryan E."/>
            <person name="Andrews S."/>
            <person name="Geisel C."/>
            <person name="Layman D."/>
            <person name="Du H."/>
            <person name="Ali J."/>
            <person name="Berghoff A."/>
            <person name="Jones K."/>
            <person name="Drone K."/>
            <person name="Cotton M."/>
            <person name="Joshu C."/>
            <person name="Antonoiu B."/>
            <person name="Zidanic M."/>
            <person name="Strong C."/>
            <person name="Sun H."/>
            <person name="Lamar B."/>
            <person name="Yordan C."/>
            <person name="Ma P."/>
            <person name="Zhong J."/>
            <person name="Preston R."/>
            <person name="Vil D."/>
            <person name="Shekher M."/>
            <person name="Matero A."/>
            <person name="Shah R."/>
            <person name="Swaby I.K."/>
            <person name="O'Shaughnessy A."/>
            <person name="Rodriguez M."/>
            <person name="Hoffman J."/>
            <person name="Till S."/>
            <person name="Granat S."/>
            <person name="Shohdy N."/>
            <person name="Hasegawa A."/>
            <person name="Hameed A."/>
            <person name="Lodhi M."/>
            <person name="Johnson A."/>
            <person name="Chen E."/>
            <person name="Marra M.A."/>
            <person name="Martienssen R."/>
            <person name="McCombie W.R."/>
        </authorList>
    </citation>
    <scope>NUCLEOTIDE SEQUENCE [LARGE SCALE GENOMIC DNA]</scope>
    <source>
        <strain>cv. Columbia</strain>
    </source>
</reference>
<reference key="2">
    <citation type="journal article" date="2017" name="Plant J.">
        <title>Araport11: a complete reannotation of the Arabidopsis thaliana reference genome.</title>
        <authorList>
            <person name="Cheng C.Y."/>
            <person name="Krishnakumar V."/>
            <person name="Chan A.P."/>
            <person name="Thibaud-Nissen F."/>
            <person name="Schobel S."/>
            <person name="Town C.D."/>
        </authorList>
    </citation>
    <scope>GENOME REANNOTATION</scope>
    <source>
        <strain>cv. Columbia</strain>
    </source>
</reference>
<reference key="3">
    <citation type="submission" date="2004-05" db="EMBL/GenBank/DDBJ databases">
        <title>Arabidopsis ORF clones.</title>
        <authorList>
            <person name="Shinn P."/>
            <person name="Chen H."/>
            <person name="Cheuk R."/>
            <person name="Kim C.J."/>
            <person name="Carninci P."/>
            <person name="Hayashizaki Y."/>
            <person name="Ishida J."/>
            <person name="Kamiya A."/>
            <person name="Kawai J."/>
            <person name="Narusaka M."/>
            <person name="Sakurai T."/>
            <person name="Satou M."/>
            <person name="Seki M."/>
            <person name="Shinozaki K."/>
            <person name="Ecker J.R."/>
        </authorList>
    </citation>
    <scope>NUCLEOTIDE SEQUENCE [LARGE SCALE MRNA]</scope>
    <source>
        <strain>cv. Columbia</strain>
    </source>
</reference>
<reference key="4">
    <citation type="submission" date="2004-09" db="EMBL/GenBank/DDBJ databases">
        <title>Large-scale analysis of RIKEN Arabidopsis full-length (RAFL) cDNAs.</title>
        <authorList>
            <person name="Totoki Y."/>
            <person name="Seki M."/>
            <person name="Ishida J."/>
            <person name="Nakajima M."/>
            <person name="Enju A."/>
            <person name="Kamiya A."/>
            <person name="Narusaka M."/>
            <person name="Shin-i T."/>
            <person name="Nakagawa M."/>
            <person name="Sakamoto N."/>
            <person name="Oishi K."/>
            <person name="Kohara Y."/>
            <person name="Kobayashi M."/>
            <person name="Toyoda A."/>
            <person name="Sakaki Y."/>
            <person name="Sakurai T."/>
            <person name="Iida K."/>
            <person name="Akiyama K."/>
            <person name="Satou M."/>
            <person name="Toyoda T."/>
            <person name="Konagaya A."/>
            <person name="Carninci P."/>
            <person name="Kawai J."/>
            <person name="Hayashizaki Y."/>
            <person name="Shinozaki K."/>
        </authorList>
    </citation>
    <scope>NUCLEOTIDE SEQUENCE [LARGE SCALE MRNA]</scope>
    <source>
        <strain>cv. Columbia</strain>
    </source>
</reference>
<reference key="5">
    <citation type="submission" date="2009-03" db="EMBL/GenBank/DDBJ databases">
        <title>ORF cloning and analysis of Arabidopsis transcription factor genes.</title>
        <authorList>
            <person name="Fujita M."/>
            <person name="Mizukado S."/>
            <person name="Seki M."/>
            <person name="Shinozaki K."/>
            <person name="Mitsuda N."/>
            <person name="Takiguchi Y."/>
            <person name="Takagi M."/>
        </authorList>
    </citation>
    <scope>NUCLEOTIDE SEQUENCE [LARGE SCALE GENOMIC DNA]</scope>
</reference>
<reference key="6">
    <citation type="journal article" date="2010" name="BMC Plant Biol.">
        <title>The FANTASTIC FOUR proteins influence shoot meristem size in Arabidopsis thaliana.</title>
        <authorList>
            <person name="Wahl V."/>
            <person name="Brand L.H."/>
            <person name="Guo Y.L."/>
            <person name="Schmid M."/>
        </authorList>
    </citation>
    <scope>FUNCTION</scope>
    <scope>DEVELOPMENTAL STAGE</scope>
    <scope>TISSUE SPECIFICITY</scope>
    <source>
        <strain>cv. Columbia</strain>
    </source>
</reference>
<sequence length="271" mass="31197">MSIVVGQAYQHLPKQVSQNPDVGGWSFLQYFSEPKGIVQNREDDTKKTAYVYPIEKRSVAKLSLEMCTESLGTENGSDSGDEMSLLALEATNISKSPRLTTKPQKETSFMTRENSFPPPLNSVNGFNNSRMVKSYKEDGRLVVQAIRVCSPPRCFVSERREGRLRLCLSQNSLNSQDAEEEFEEEDEDDQYDAEEEEEEEEEEEEEEEEEEEEEEEEEEEDEEGIVGNNENFEGKSGNKKVSNRPKRRCNENGCEPKTMLNWKQQQFWVTT</sequence>
<comment type="function">
    <text evidence="2">Able to repress WUS when constitutively overexpressed, but have no effect on CLV3.</text>
</comment>
<comment type="tissue specificity">
    <text evidence="2">Expressed in the shoot apex, stamens, anthers and young siliques. Detected in provascular and vascular tissue.</text>
</comment>
<comment type="developmental stage">
    <text evidence="2">Expressed throughout development. During germination, initially restricted to the hypocotyl, but expression gradually shifts to the root and on day 6, to the vasculature of the cotyledons and then of the leaves. Increased expression in the shoot apex during the transition to flowering. Induced in the inflorescence vasculature and young flower buds as flowering commenced. Expressed in developing embryos from the early heart stage until torpedo stage.</text>
</comment>
<comment type="similarity">
    <text evidence="3">Belongs to the fantastic four family.</text>
</comment>
<protein>
    <recommendedName>
        <fullName>Protein FANTASTIC FOUR 1</fullName>
    </recommendedName>
</protein>
<evidence type="ECO:0000256" key="1">
    <source>
        <dbReference type="SAM" id="MobiDB-lite"/>
    </source>
</evidence>
<evidence type="ECO:0000269" key="2">
    <source>
    </source>
</evidence>
<evidence type="ECO:0000305" key="3"/>
<feature type="chain" id="PRO_0000405260" description="Protein FANTASTIC FOUR 1">
    <location>
        <begin position="1"/>
        <end position="271"/>
    </location>
</feature>
<feature type="domain" description="FAF">
    <location>
        <begin position="114"/>
        <end position="168"/>
    </location>
</feature>
<feature type="region of interest" description="Disordered" evidence="1">
    <location>
        <begin position="174"/>
        <end position="255"/>
    </location>
</feature>
<feature type="compositionally biased region" description="Acidic residues" evidence="1">
    <location>
        <begin position="177"/>
        <end position="224"/>
    </location>
</feature>
<feature type="compositionally biased region" description="Basic residues" evidence="1">
    <location>
        <begin position="237"/>
        <end position="247"/>
    </location>
</feature>
<feature type="sequence conflict" description="In Ref. 3; AAT06460 and 4; BAD44084." evidence="3" ref="3 4">
    <original>E</original>
    <variation>G</variation>
    <location>
        <position position="223"/>
    </location>
</feature>